<proteinExistence type="inferred from homology"/>
<gene>
    <name type="ordered locus">COXBURSA331_A2220</name>
</gene>
<protein>
    <recommendedName>
        <fullName evidence="1">Putative pre-16S rRNA nuclease</fullName>
        <ecNumber evidence="1">3.1.-.-</ecNumber>
    </recommendedName>
</protein>
<reference key="1">
    <citation type="submission" date="2007-11" db="EMBL/GenBank/DDBJ databases">
        <title>Genome sequencing of phylogenetically and phenotypically diverse Coxiella burnetii isolates.</title>
        <authorList>
            <person name="Seshadri R."/>
            <person name="Samuel J.E."/>
        </authorList>
    </citation>
    <scope>NUCLEOTIDE SEQUENCE [LARGE SCALE GENOMIC DNA]</scope>
    <source>
        <strain>RSA 331 / Henzerling II</strain>
    </source>
</reference>
<name>YQGF_COXBR</name>
<feature type="chain" id="PRO_1000131020" description="Putative pre-16S rRNA nuclease">
    <location>
        <begin position="1"/>
        <end position="141"/>
    </location>
</feature>
<evidence type="ECO:0000255" key="1">
    <source>
        <dbReference type="HAMAP-Rule" id="MF_00651"/>
    </source>
</evidence>
<keyword id="KW-0963">Cytoplasm</keyword>
<keyword id="KW-0378">Hydrolase</keyword>
<keyword id="KW-0540">Nuclease</keyword>
<keyword id="KW-0690">Ribosome biogenesis</keyword>
<accession>A9NBU2</accession>
<organism>
    <name type="scientific">Coxiella burnetii (strain RSA 331 / Henzerling II)</name>
    <dbReference type="NCBI Taxonomy" id="360115"/>
    <lineage>
        <taxon>Bacteria</taxon>
        <taxon>Pseudomonadati</taxon>
        <taxon>Pseudomonadota</taxon>
        <taxon>Gammaproteobacteria</taxon>
        <taxon>Legionellales</taxon>
        <taxon>Coxiellaceae</taxon>
        <taxon>Coxiella</taxon>
    </lineage>
</organism>
<sequence length="141" mass="16111">MPNQNLIALGFDFGMKRIGVAVGQTVTHSANAIAILKAQDGVPDWEKIKMLIETWHANVLVVGIPYNMDGSEQTLTFAARKFARKLQMRFGLPVSMVDERLTTIEAKRQWYEQGLTKRPQHLDNYAAKLILEQWLQEQKNE</sequence>
<dbReference type="EC" id="3.1.-.-" evidence="1"/>
<dbReference type="EMBL" id="CP000890">
    <property type="protein sequence ID" value="ABX78571.1"/>
    <property type="molecule type" value="Genomic_DNA"/>
</dbReference>
<dbReference type="SMR" id="A9NBU2"/>
<dbReference type="KEGG" id="cbs:COXBURSA331_A2220"/>
<dbReference type="HOGENOM" id="CLU_098240_3_0_6"/>
<dbReference type="GO" id="GO:0005829">
    <property type="term" value="C:cytosol"/>
    <property type="evidence" value="ECO:0007669"/>
    <property type="project" value="TreeGrafter"/>
</dbReference>
<dbReference type="GO" id="GO:0004518">
    <property type="term" value="F:nuclease activity"/>
    <property type="evidence" value="ECO:0007669"/>
    <property type="project" value="UniProtKB-KW"/>
</dbReference>
<dbReference type="GO" id="GO:0000967">
    <property type="term" value="P:rRNA 5'-end processing"/>
    <property type="evidence" value="ECO:0007669"/>
    <property type="project" value="UniProtKB-UniRule"/>
</dbReference>
<dbReference type="CDD" id="cd16964">
    <property type="entry name" value="YqgF"/>
    <property type="match status" value="1"/>
</dbReference>
<dbReference type="FunFam" id="3.30.420.140:FF:000022">
    <property type="entry name" value="Putative pre-16S rRNA nuclease"/>
    <property type="match status" value="1"/>
</dbReference>
<dbReference type="Gene3D" id="3.30.420.140">
    <property type="entry name" value="YqgF/RNase H-like domain"/>
    <property type="match status" value="1"/>
</dbReference>
<dbReference type="HAMAP" id="MF_00651">
    <property type="entry name" value="Nuclease_YqgF"/>
    <property type="match status" value="1"/>
</dbReference>
<dbReference type="InterPro" id="IPR012337">
    <property type="entry name" value="RNaseH-like_sf"/>
</dbReference>
<dbReference type="InterPro" id="IPR005227">
    <property type="entry name" value="YqgF"/>
</dbReference>
<dbReference type="InterPro" id="IPR006641">
    <property type="entry name" value="YqgF/RNaseH-like_dom"/>
</dbReference>
<dbReference type="InterPro" id="IPR037027">
    <property type="entry name" value="YqgF/RNaseH-like_dom_sf"/>
</dbReference>
<dbReference type="NCBIfam" id="TIGR00250">
    <property type="entry name" value="RNAse_H_YqgF"/>
    <property type="match status" value="1"/>
</dbReference>
<dbReference type="PANTHER" id="PTHR33317">
    <property type="entry name" value="POLYNUCLEOTIDYL TRANSFERASE, RIBONUCLEASE H-LIKE SUPERFAMILY PROTEIN"/>
    <property type="match status" value="1"/>
</dbReference>
<dbReference type="PANTHER" id="PTHR33317:SF4">
    <property type="entry name" value="POLYNUCLEOTIDYL TRANSFERASE, RIBONUCLEASE H-LIKE SUPERFAMILY PROTEIN"/>
    <property type="match status" value="1"/>
</dbReference>
<dbReference type="Pfam" id="PF03652">
    <property type="entry name" value="RuvX"/>
    <property type="match status" value="1"/>
</dbReference>
<dbReference type="SMART" id="SM00732">
    <property type="entry name" value="YqgFc"/>
    <property type="match status" value="1"/>
</dbReference>
<dbReference type="SUPFAM" id="SSF53098">
    <property type="entry name" value="Ribonuclease H-like"/>
    <property type="match status" value="1"/>
</dbReference>
<comment type="function">
    <text evidence="1">Could be a nuclease involved in processing of the 5'-end of pre-16S rRNA.</text>
</comment>
<comment type="subcellular location">
    <subcellularLocation>
        <location evidence="1">Cytoplasm</location>
    </subcellularLocation>
</comment>
<comment type="similarity">
    <text evidence="1">Belongs to the YqgF nuclease family.</text>
</comment>